<evidence type="ECO:0000250" key="1">
    <source>
        <dbReference type="UniProtKB" id="P01210"/>
    </source>
</evidence>
<evidence type="ECO:0000255" key="2"/>
<evidence type="ECO:0000256" key="3">
    <source>
        <dbReference type="SAM" id="MobiDB-lite"/>
    </source>
</evidence>
<evidence type="ECO:0000269" key="4">
    <source>
    </source>
</evidence>
<evidence type="ECO:0000303" key="5">
    <source>
    </source>
</evidence>
<evidence type="ECO:0000305" key="6"/>
<evidence type="ECO:0000305" key="7">
    <source>
    </source>
</evidence>
<sequence length="238" mass="26014">MAASALSTCLWMLVLGTCVSLVVGTDCGKECALCVYRLLGQQSTLSSLTCSLECDGGLDSQKLRLCQDVLLEEENQSPLASQQDQERVDAMMADEEDATSPEHQMAKKYGGFMKRYGGFMSRRSSASSLEEAGNQDEEQSIRTEILKILNAATEHGGEGDGQEAEAVKRYGGFMRRADRGAAQGNLVEAVLGRVLKKRYGGFMRRVGRPEWLVDSSKKVGVLKENGSELQKRHGGFMD</sequence>
<keyword id="KW-0165">Cleavage on pair of basic residues</keyword>
<keyword id="KW-1015">Disulfide bond</keyword>
<keyword id="KW-0257">Endorphin</keyword>
<keyword id="KW-1213">G-protein coupled receptor impairing toxin</keyword>
<keyword id="KW-0527">Neuropeptide</keyword>
<keyword id="KW-0555">Opioid peptide</keyword>
<keyword id="KW-0964">Secreted</keyword>
<keyword id="KW-0732">Signal</keyword>
<keyword id="KW-0800">Toxin</keyword>
<feature type="signal peptide" evidence="2">
    <location>
        <begin position="1"/>
        <end position="25"/>
    </location>
</feature>
<feature type="peptide" id="PRO_0000440267" description="Synenkephalin">
    <location>
        <begin position="26"/>
        <end position="106"/>
    </location>
</feature>
<feature type="peptide" id="PRO_0000440268" description="Met-enkephalin">
    <location>
        <begin position="109"/>
        <end position="113"/>
    </location>
</feature>
<feature type="peptide" id="PRO_0000440269" description="Met-enkephalin-Ser" evidence="6">
    <location>
        <begin position="116"/>
        <end position="121"/>
    </location>
</feature>
<feature type="propeptide" id="PRO_0000440270" evidence="6">
    <location>
        <begin position="124"/>
        <end position="167"/>
    </location>
</feature>
<feature type="peptide" id="PRO_0000440271" description="Met-enkephalin">
    <location>
        <begin position="170"/>
        <end position="174"/>
    </location>
</feature>
<feature type="propeptide" id="PRO_0000440272" evidence="6">
    <location>
        <begin position="177"/>
        <end position="195"/>
    </location>
</feature>
<feature type="peptide" id="PRO_0000440273" description="Met-enkephalin">
    <location>
        <begin position="199"/>
        <end position="203"/>
    </location>
</feature>
<feature type="propeptide" id="PRO_0000440274" evidence="6">
    <location>
        <begin position="206"/>
        <end position="230"/>
    </location>
</feature>
<feature type="peptide" id="PRO_0000440275" description="Met-enkephalin-His-Asp" evidence="6">
    <location>
        <begin position="233"/>
        <end position="238"/>
    </location>
</feature>
<feature type="region of interest" description="Disordered" evidence="3">
    <location>
        <begin position="76"/>
        <end position="103"/>
    </location>
</feature>
<feature type="disulfide bond" evidence="1">
    <location>
        <begin position="27"/>
        <end position="50"/>
    </location>
</feature>
<feature type="disulfide bond" evidence="1">
    <location>
        <begin position="31"/>
        <end position="54"/>
    </location>
</feature>
<feature type="disulfide bond" evidence="1">
    <location>
        <begin position="34"/>
        <end position="66"/>
    </location>
</feature>
<reference key="1">
    <citation type="journal article" date="2017" name="Curr. Biol.">
        <title>The evolution of fangs, venom, and mimicry systems in blenny fishes.</title>
        <authorList>
            <person name="Casewell N.R."/>
            <person name="Visser J.C."/>
            <person name="Baumann K."/>
            <person name="Dobson J."/>
            <person name="Han H."/>
            <person name="Kuruppu S."/>
            <person name="Morgan M."/>
            <person name="Romilio A."/>
            <person name="Weisbecker V."/>
            <person name="Ali S.A."/>
            <person name="Debono J."/>
            <person name="Koludarov I."/>
            <person name="Que I."/>
            <person name="Bird G.C."/>
            <person name="Cooke G.M."/>
            <person name="Nouwens A."/>
            <person name="Hodgson W.C."/>
            <person name="Wagstaff S.C."/>
            <person name="Cheney K.L."/>
            <person name="Vetter I."/>
            <person name="van der Weerd L."/>
            <person name="Richardson M.K."/>
            <person name="Fry B.G."/>
        </authorList>
    </citation>
    <scope>NUCLEOTIDE SEQUENCE [MRNA]</scope>
    <scope>TISSUE SPECIFICITY</scope>
</reference>
<organism>
    <name type="scientific">Meiacanthus atrodorsalis</name>
    <name type="common">Forktail blenny</name>
    <name type="synonym">Petroscirtes atrodorsalis</name>
    <dbReference type="NCBI Taxonomy" id="1405650"/>
    <lineage>
        <taxon>Eukaryota</taxon>
        <taxon>Metazoa</taxon>
        <taxon>Chordata</taxon>
        <taxon>Craniata</taxon>
        <taxon>Vertebrata</taxon>
        <taxon>Euteleostomi</taxon>
        <taxon>Actinopterygii</taxon>
        <taxon>Neopterygii</taxon>
        <taxon>Teleostei</taxon>
        <taxon>Neoteleostei</taxon>
        <taxon>Acanthomorphata</taxon>
        <taxon>Ovalentaria</taxon>
        <taxon>Blenniimorphae</taxon>
        <taxon>Blenniiformes</taxon>
        <taxon>Blennioidei</taxon>
        <taxon>Blenniidae</taxon>
        <taxon>Blenniinae</taxon>
        <taxon>Meiacanthus</taxon>
    </lineage>
</organism>
<comment type="function">
    <text evidence="7">Met-enkephalins compete with and mimic the effects of opiate drugs. They play a role in a number of physiologic functions, including pain perception and responses to stress. Enkephalin peptides found in Meiacanthus fangblennies induce physiological effects via their interaction with delta-type opioid receptors (OPRD1) (tested on M.grammistes). Therefore, finding a proenkephalin sequence in M.atrodorsalis venom suggests that this protein act in the same manner (Probable).</text>
</comment>
<comment type="subcellular location">
    <subcellularLocation>
        <location evidence="7">Secreted</location>
    </subcellularLocation>
</comment>
<comment type="tissue specificity">
    <text evidence="4">Expressed by the venom gland. Moderately expressed in the venom gland transcriptome.</text>
</comment>
<comment type="miscellaneous">
    <text evidence="4">In contrast to venom of most venomous species, the venom of Meiacanthus fangblennies is relatively painless, when tested on mammals. While species-specific nociceptive effects are possible, this defensive venom is surprisingly multifunctional, being markedly hypotensive (via neuropeptide Y and/ or enkephalins), weakly neurotoxic (unknown components, possibly PLA2s), and perhaps also pro-inflammatory (PLA2s and/or enkephalins). The pronounced hypotensive effects induced by venom peptides seem highly likely to affect the coordination and/or swim performance of envenomed fishes and therefore likely confer a fitness advantage to the fangblenny by facilitating escape from predators.</text>
</comment>
<comment type="similarity">
    <text evidence="6">Belongs to the opioid neuropeptide precursor family.</text>
</comment>
<accession>P0DP56</accession>
<dbReference type="GO" id="GO:0043679">
    <property type="term" value="C:axon terminus"/>
    <property type="evidence" value="ECO:0007669"/>
    <property type="project" value="TreeGrafter"/>
</dbReference>
<dbReference type="GO" id="GO:0030425">
    <property type="term" value="C:dendrite"/>
    <property type="evidence" value="ECO:0007669"/>
    <property type="project" value="TreeGrafter"/>
</dbReference>
<dbReference type="GO" id="GO:0005576">
    <property type="term" value="C:extracellular region"/>
    <property type="evidence" value="ECO:0007669"/>
    <property type="project" value="UniProtKB-SubCell"/>
</dbReference>
<dbReference type="GO" id="GO:0043025">
    <property type="term" value="C:neuronal cell body"/>
    <property type="evidence" value="ECO:0007669"/>
    <property type="project" value="TreeGrafter"/>
</dbReference>
<dbReference type="GO" id="GO:0005886">
    <property type="term" value="C:plasma membrane"/>
    <property type="evidence" value="ECO:0007669"/>
    <property type="project" value="TreeGrafter"/>
</dbReference>
<dbReference type="GO" id="GO:0001515">
    <property type="term" value="F:opioid peptide activity"/>
    <property type="evidence" value="ECO:0007669"/>
    <property type="project" value="UniProtKB-KW"/>
</dbReference>
<dbReference type="GO" id="GO:0031628">
    <property type="term" value="F:opioid receptor binding"/>
    <property type="evidence" value="ECO:0007669"/>
    <property type="project" value="TreeGrafter"/>
</dbReference>
<dbReference type="GO" id="GO:0090729">
    <property type="term" value="F:toxin activity"/>
    <property type="evidence" value="ECO:0007669"/>
    <property type="project" value="UniProtKB-KW"/>
</dbReference>
<dbReference type="GO" id="GO:0007268">
    <property type="term" value="P:chemical synaptic transmission"/>
    <property type="evidence" value="ECO:0007669"/>
    <property type="project" value="TreeGrafter"/>
</dbReference>
<dbReference type="GO" id="GO:0007218">
    <property type="term" value="P:neuropeptide signaling pathway"/>
    <property type="evidence" value="ECO:0007669"/>
    <property type="project" value="UniProtKB-KW"/>
</dbReference>
<dbReference type="GO" id="GO:0007600">
    <property type="term" value="P:sensory perception"/>
    <property type="evidence" value="ECO:0007669"/>
    <property type="project" value="TreeGrafter"/>
</dbReference>
<dbReference type="InterPro" id="IPR006024">
    <property type="entry name" value="Opioid_neupept"/>
</dbReference>
<dbReference type="PANTHER" id="PTHR11438">
    <property type="entry name" value="PROENKEPHALIN"/>
    <property type="match status" value="1"/>
</dbReference>
<dbReference type="PANTHER" id="PTHR11438:SF3">
    <property type="entry name" value="PROENKEPHALIN-A"/>
    <property type="match status" value="1"/>
</dbReference>
<dbReference type="Pfam" id="PF01160">
    <property type="entry name" value="Opiods_neuropep"/>
    <property type="match status" value="1"/>
</dbReference>
<dbReference type="PRINTS" id="PR01028">
    <property type="entry name" value="OPIOIDPRCRSR"/>
</dbReference>
<proteinExistence type="evidence at transcript level"/>
<protein>
    <recommendedName>
        <fullName>Proenkephalin-A</fullName>
    </recommendedName>
    <alternativeName>
        <fullName evidence="5">Proenkephalin</fullName>
    </alternativeName>
    <component>
        <recommendedName>
            <fullName evidence="6">Synenkephalin</fullName>
        </recommendedName>
    </component>
    <component>
        <recommendedName>
            <fullName evidence="6">Met-enkephalin</fullName>
        </recommendedName>
        <alternativeName>
            <fullName>Opioid growth factor</fullName>
            <shortName>OGF</shortName>
        </alternativeName>
    </component>
    <component>
        <recommendedName>
            <fullName evidence="6">Met-enkephalin-His-Asp</fullName>
        </recommendedName>
    </component>
    <component>
        <recommendedName>
            <fullName evidence="6">Met-enkephalin-Ser</fullName>
        </recommendedName>
    </component>
</protein>
<name>PENKV_MEIAT</name>